<reference key="1">
    <citation type="journal article" date="2005" name="Nat. Biotechnol.">
        <title>The genome sequence of the ethanologenic bacterium Zymomonas mobilis ZM4.</title>
        <authorList>
            <person name="Seo J.-S."/>
            <person name="Chong H."/>
            <person name="Park H.S."/>
            <person name="Yoon K.-O."/>
            <person name="Jung C."/>
            <person name="Kim J.J."/>
            <person name="Hong J.H."/>
            <person name="Kim H."/>
            <person name="Kim J.-H."/>
            <person name="Kil J.-I."/>
            <person name="Park C.J."/>
            <person name="Oh H.-M."/>
            <person name="Lee J.-S."/>
            <person name="Jin S.-J."/>
            <person name="Um H.-W."/>
            <person name="Lee H.-J."/>
            <person name="Oh S.-J."/>
            <person name="Kim J.Y."/>
            <person name="Kang H.L."/>
            <person name="Lee S.Y."/>
            <person name="Lee K.J."/>
            <person name="Kang H.S."/>
        </authorList>
    </citation>
    <scope>NUCLEOTIDE SEQUENCE [LARGE SCALE GENOMIC DNA]</scope>
    <source>
        <strain>ATCC 31821 / ZM4 / CP4</strain>
    </source>
</reference>
<gene>
    <name type="ordered locus">ZMO0153</name>
</gene>
<evidence type="ECO:0000255" key="1">
    <source>
        <dbReference type="HAMAP-Rule" id="MF_00693"/>
    </source>
</evidence>
<protein>
    <recommendedName>
        <fullName evidence="1">Probable transcriptional regulatory protein ZMO0153</fullName>
    </recommendedName>
</protein>
<name>Y153_ZYMMO</name>
<dbReference type="EMBL" id="AE008692">
    <property type="protein sequence ID" value="AAV88777.1"/>
    <property type="molecule type" value="Genomic_DNA"/>
</dbReference>
<dbReference type="RefSeq" id="WP_011240113.1">
    <property type="nucleotide sequence ID" value="NZ_CP035711.1"/>
</dbReference>
<dbReference type="SMR" id="Q5NR77"/>
<dbReference type="STRING" id="264203.ZMO0153"/>
<dbReference type="KEGG" id="zmo:ZMO0153"/>
<dbReference type="eggNOG" id="COG0217">
    <property type="taxonomic scope" value="Bacteria"/>
</dbReference>
<dbReference type="HOGENOM" id="CLU_062974_2_2_5"/>
<dbReference type="Proteomes" id="UP000001173">
    <property type="component" value="Chromosome"/>
</dbReference>
<dbReference type="GO" id="GO:0005829">
    <property type="term" value="C:cytosol"/>
    <property type="evidence" value="ECO:0007669"/>
    <property type="project" value="TreeGrafter"/>
</dbReference>
<dbReference type="GO" id="GO:0003677">
    <property type="term" value="F:DNA binding"/>
    <property type="evidence" value="ECO:0007669"/>
    <property type="project" value="UniProtKB-UniRule"/>
</dbReference>
<dbReference type="GO" id="GO:0006355">
    <property type="term" value="P:regulation of DNA-templated transcription"/>
    <property type="evidence" value="ECO:0007669"/>
    <property type="project" value="UniProtKB-UniRule"/>
</dbReference>
<dbReference type="FunFam" id="1.10.10.200:FF:000002">
    <property type="entry name" value="Probable transcriptional regulatory protein CLM62_37755"/>
    <property type="match status" value="1"/>
</dbReference>
<dbReference type="Gene3D" id="1.10.10.200">
    <property type="match status" value="1"/>
</dbReference>
<dbReference type="Gene3D" id="3.30.70.980">
    <property type="match status" value="2"/>
</dbReference>
<dbReference type="HAMAP" id="MF_00693">
    <property type="entry name" value="Transcrip_reg_TACO1"/>
    <property type="match status" value="1"/>
</dbReference>
<dbReference type="InterPro" id="IPR017856">
    <property type="entry name" value="Integrase-like_N"/>
</dbReference>
<dbReference type="InterPro" id="IPR048300">
    <property type="entry name" value="TACO1_YebC-like_2nd/3rd_dom"/>
</dbReference>
<dbReference type="InterPro" id="IPR049083">
    <property type="entry name" value="TACO1_YebC_N"/>
</dbReference>
<dbReference type="InterPro" id="IPR002876">
    <property type="entry name" value="Transcrip_reg_TACO1-like"/>
</dbReference>
<dbReference type="InterPro" id="IPR026564">
    <property type="entry name" value="Transcrip_reg_TACO1-like_dom3"/>
</dbReference>
<dbReference type="InterPro" id="IPR029072">
    <property type="entry name" value="YebC-like"/>
</dbReference>
<dbReference type="NCBIfam" id="NF001030">
    <property type="entry name" value="PRK00110.1"/>
    <property type="match status" value="1"/>
</dbReference>
<dbReference type="NCBIfam" id="NF009044">
    <property type="entry name" value="PRK12378.1"/>
    <property type="match status" value="1"/>
</dbReference>
<dbReference type="NCBIfam" id="TIGR01033">
    <property type="entry name" value="YebC/PmpR family DNA-binding transcriptional regulator"/>
    <property type="match status" value="1"/>
</dbReference>
<dbReference type="PANTHER" id="PTHR12532:SF6">
    <property type="entry name" value="TRANSCRIPTIONAL REGULATORY PROTEIN YEBC-RELATED"/>
    <property type="match status" value="1"/>
</dbReference>
<dbReference type="PANTHER" id="PTHR12532">
    <property type="entry name" value="TRANSLATIONAL ACTIVATOR OF CYTOCHROME C OXIDASE 1"/>
    <property type="match status" value="1"/>
</dbReference>
<dbReference type="Pfam" id="PF20772">
    <property type="entry name" value="TACO1_YebC_N"/>
    <property type="match status" value="1"/>
</dbReference>
<dbReference type="Pfam" id="PF01709">
    <property type="entry name" value="Transcrip_reg"/>
    <property type="match status" value="1"/>
</dbReference>
<dbReference type="SUPFAM" id="SSF75625">
    <property type="entry name" value="YebC-like"/>
    <property type="match status" value="1"/>
</dbReference>
<proteinExistence type="inferred from homology"/>
<organism>
    <name type="scientific">Zymomonas mobilis subsp. mobilis (strain ATCC 31821 / ZM4 / CP4)</name>
    <dbReference type="NCBI Taxonomy" id="264203"/>
    <lineage>
        <taxon>Bacteria</taxon>
        <taxon>Pseudomonadati</taxon>
        <taxon>Pseudomonadota</taxon>
        <taxon>Alphaproteobacteria</taxon>
        <taxon>Sphingomonadales</taxon>
        <taxon>Zymomonadaceae</taxon>
        <taxon>Zymomonas</taxon>
    </lineage>
</organism>
<accession>Q5NR77</accession>
<keyword id="KW-0963">Cytoplasm</keyword>
<keyword id="KW-0238">DNA-binding</keyword>
<keyword id="KW-1185">Reference proteome</keyword>
<keyword id="KW-0804">Transcription</keyword>
<keyword id="KW-0805">Transcription regulation</keyword>
<feature type="chain" id="PRO_0000175941" description="Probable transcriptional regulatory protein ZMO0153">
    <location>
        <begin position="1"/>
        <end position="249"/>
    </location>
</feature>
<comment type="subcellular location">
    <subcellularLocation>
        <location evidence="1">Cytoplasm</location>
    </subcellularLocation>
</comment>
<comment type="similarity">
    <text evidence="1">Belongs to the TACO1 family.</text>
</comment>
<sequence length="249" mass="26976">MAGHSKFKNIMYRKGAQDKKRSALFSKLSREVTVAAKSGLPDPNANPRLRAAVSAARSGGMPKDNIERAIAKAIGGDGDNYEELRYEGFGPSGVSLIIETLTDNRNRTATNVRTALSKNGGNLGTSGSVTHGFDRMGLITYKAEAGDPDKIFEAALEAGAEDVTSSEDEHEIWTAQADLHEVAGKLEAILGEPEGVKLAWRPQTLINVDEESAGTLLRLIETLEDDDDVQTVWANYDIDDEVMERLGQE</sequence>